<organism>
    <name type="scientific">Prosthecochloris aestuarii (strain DSM 271 / SK 413)</name>
    <dbReference type="NCBI Taxonomy" id="290512"/>
    <lineage>
        <taxon>Bacteria</taxon>
        <taxon>Pseudomonadati</taxon>
        <taxon>Chlorobiota</taxon>
        <taxon>Chlorobiia</taxon>
        <taxon>Chlorobiales</taxon>
        <taxon>Chlorobiaceae</taxon>
        <taxon>Prosthecochloris</taxon>
    </lineage>
</organism>
<reference key="1">
    <citation type="submission" date="2008-06" db="EMBL/GenBank/DDBJ databases">
        <title>Complete sequence of chromosome of Prosthecochloris aestuarii DSM 271.</title>
        <authorList>
            <consortium name="US DOE Joint Genome Institute"/>
            <person name="Lucas S."/>
            <person name="Copeland A."/>
            <person name="Lapidus A."/>
            <person name="Glavina del Rio T."/>
            <person name="Dalin E."/>
            <person name="Tice H."/>
            <person name="Bruce D."/>
            <person name="Goodwin L."/>
            <person name="Pitluck S."/>
            <person name="Schmutz J."/>
            <person name="Larimer F."/>
            <person name="Land M."/>
            <person name="Hauser L."/>
            <person name="Kyrpides N."/>
            <person name="Anderson I."/>
            <person name="Liu Z."/>
            <person name="Li T."/>
            <person name="Zhao F."/>
            <person name="Overmann J."/>
            <person name="Bryant D.A."/>
            <person name="Richardson P."/>
        </authorList>
    </citation>
    <scope>NUCLEOTIDE SEQUENCE [LARGE SCALE GENOMIC DNA]</scope>
    <source>
        <strain>DSM 271 / SK 413</strain>
    </source>
</reference>
<sequence>MSLIPHDLGRQGEDAAASWLLCKGYRIIRRNYRYRRNEIDIIAMDDRTLCFVEVKTRATIDKGHPLEAVTPQKQKEIIRTARAFLCMEYHEEIDCRFDVVAIIAKGYEKGRLKEFDVEHITDAFWAE</sequence>
<name>Y016_PROA2</name>
<comment type="similarity">
    <text evidence="1">Belongs to the UPF0102 family.</text>
</comment>
<accession>B4S950</accession>
<evidence type="ECO:0000255" key="1">
    <source>
        <dbReference type="HAMAP-Rule" id="MF_00048"/>
    </source>
</evidence>
<feature type="chain" id="PRO_1000091253" description="UPF0102 protein Paes_0016">
    <location>
        <begin position="1"/>
        <end position="127"/>
    </location>
</feature>
<proteinExistence type="inferred from homology"/>
<gene>
    <name type="ordered locus">Paes_0016</name>
</gene>
<dbReference type="EMBL" id="CP001108">
    <property type="protein sequence ID" value="ACF45082.1"/>
    <property type="molecule type" value="Genomic_DNA"/>
</dbReference>
<dbReference type="RefSeq" id="WP_012504619.1">
    <property type="nucleotide sequence ID" value="NC_011059.1"/>
</dbReference>
<dbReference type="SMR" id="B4S950"/>
<dbReference type="STRING" id="290512.Paes_0016"/>
<dbReference type="KEGG" id="paa:Paes_0016"/>
<dbReference type="eggNOG" id="COG0792">
    <property type="taxonomic scope" value="Bacteria"/>
</dbReference>
<dbReference type="HOGENOM" id="CLU_115353_2_1_10"/>
<dbReference type="Proteomes" id="UP000002725">
    <property type="component" value="Chromosome"/>
</dbReference>
<dbReference type="GO" id="GO:0003676">
    <property type="term" value="F:nucleic acid binding"/>
    <property type="evidence" value="ECO:0007669"/>
    <property type="project" value="InterPro"/>
</dbReference>
<dbReference type="CDD" id="cd20736">
    <property type="entry name" value="PoNe_Nuclease"/>
    <property type="match status" value="1"/>
</dbReference>
<dbReference type="Gene3D" id="3.40.1350.10">
    <property type="match status" value="1"/>
</dbReference>
<dbReference type="HAMAP" id="MF_00048">
    <property type="entry name" value="UPF0102"/>
    <property type="match status" value="1"/>
</dbReference>
<dbReference type="InterPro" id="IPR011335">
    <property type="entry name" value="Restrct_endonuc-II-like"/>
</dbReference>
<dbReference type="InterPro" id="IPR011856">
    <property type="entry name" value="tRNA_endonuc-like_dom_sf"/>
</dbReference>
<dbReference type="InterPro" id="IPR003509">
    <property type="entry name" value="UPF0102_YraN-like"/>
</dbReference>
<dbReference type="NCBIfam" id="NF009150">
    <property type="entry name" value="PRK12497.1-3"/>
    <property type="match status" value="1"/>
</dbReference>
<dbReference type="NCBIfam" id="NF009154">
    <property type="entry name" value="PRK12497.3-3"/>
    <property type="match status" value="1"/>
</dbReference>
<dbReference type="NCBIfam" id="TIGR00252">
    <property type="entry name" value="YraN family protein"/>
    <property type="match status" value="1"/>
</dbReference>
<dbReference type="PANTHER" id="PTHR34039">
    <property type="entry name" value="UPF0102 PROTEIN YRAN"/>
    <property type="match status" value="1"/>
</dbReference>
<dbReference type="PANTHER" id="PTHR34039:SF1">
    <property type="entry name" value="UPF0102 PROTEIN YRAN"/>
    <property type="match status" value="1"/>
</dbReference>
<dbReference type="Pfam" id="PF02021">
    <property type="entry name" value="UPF0102"/>
    <property type="match status" value="1"/>
</dbReference>
<dbReference type="SUPFAM" id="SSF52980">
    <property type="entry name" value="Restriction endonuclease-like"/>
    <property type="match status" value="1"/>
</dbReference>
<protein>
    <recommendedName>
        <fullName evidence="1">UPF0102 protein Paes_0016</fullName>
    </recommendedName>
</protein>